<evidence type="ECO:0000250" key="1">
    <source>
        <dbReference type="UniProtKB" id="P00410"/>
    </source>
</evidence>
<evidence type="ECO:0000255" key="2"/>
<evidence type="ECO:0000305" key="3"/>
<reference key="1">
    <citation type="journal article" date="1992" name="Mol. Phylogenet. Evol.">
        <title>Evolution of the mitochondrial cytochrome oxidase II gene among 10 orders of insects.</title>
        <authorList>
            <person name="Liu H."/>
            <person name="Beckenbach A.T."/>
        </authorList>
    </citation>
    <scope>NUCLEOTIDE SEQUENCE [GENOMIC DNA]</scope>
</reference>
<dbReference type="EC" id="7.1.1.9"/>
<dbReference type="EMBL" id="M83966">
    <property type="protein sequence ID" value="AAA32063.1"/>
    <property type="molecule type" value="Genomic_DNA"/>
</dbReference>
<dbReference type="PIR" id="A38941">
    <property type="entry name" value="A38941"/>
</dbReference>
<dbReference type="SMR" id="P29878"/>
<dbReference type="OrthoDB" id="539285at2759"/>
<dbReference type="GO" id="GO:0005743">
    <property type="term" value="C:mitochondrial inner membrane"/>
    <property type="evidence" value="ECO:0007669"/>
    <property type="project" value="UniProtKB-SubCell"/>
</dbReference>
<dbReference type="GO" id="GO:0005507">
    <property type="term" value="F:copper ion binding"/>
    <property type="evidence" value="ECO:0007669"/>
    <property type="project" value="InterPro"/>
</dbReference>
<dbReference type="GO" id="GO:0004129">
    <property type="term" value="F:cytochrome-c oxidase activity"/>
    <property type="evidence" value="ECO:0007669"/>
    <property type="project" value="UniProtKB-EC"/>
</dbReference>
<dbReference type="GO" id="GO:0042773">
    <property type="term" value="P:ATP synthesis coupled electron transport"/>
    <property type="evidence" value="ECO:0007669"/>
    <property type="project" value="TreeGrafter"/>
</dbReference>
<dbReference type="CDD" id="cd13912">
    <property type="entry name" value="CcO_II_C"/>
    <property type="match status" value="1"/>
</dbReference>
<dbReference type="FunFam" id="2.60.40.420:FF:000001">
    <property type="entry name" value="Cytochrome c oxidase subunit 2"/>
    <property type="match status" value="1"/>
</dbReference>
<dbReference type="Gene3D" id="1.10.287.90">
    <property type="match status" value="1"/>
</dbReference>
<dbReference type="Gene3D" id="2.60.40.420">
    <property type="entry name" value="Cupredoxins - blue copper proteins"/>
    <property type="match status" value="1"/>
</dbReference>
<dbReference type="InterPro" id="IPR045187">
    <property type="entry name" value="CcO_II"/>
</dbReference>
<dbReference type="InterPro" id="IPR002429">
    <property type="entry name" value="CcO_II-like_C"/>
</dbReference>
<dbReference type="InterPro" id="IPR034210">
    <property type="entry name" value="CcO_II_C"/>
</dbReference>
<dbReference type="InterPro" id="IPR001505">
    <property type="entry name" value="Copper_CuA"/>
</dbReference>
<dbReference type="InterPro" id="IPR008972">
    <property type="entry name" value="Cupredoxin"/>
</dbReference>
<dbReference type="InterPro" id="IPR011759">
    <property type="entry name" value="Cyt_c_oxidase_su2_TM_dom"/>
</dbReference>
<dbReference type="InterPro" id="IPR036257">
    <property type="entry name" value="Cyt_c_oxidase_su2_TM_sf"/>
</dbReference>
<dbReference type="PANTHER" id="PTHR22888:SF9">
    <property type="entry name" value="CYTOCHROME C OXIDASE SUBUNIT 2"/>
    <property type="match status" value="1"/>
</dbReference>
<dbReference type="PANTHER" id="PTHR22888">
    <property type="entry name" value="CYTOCHROME C OXIDASE, SUBUNIT II"/>
    <property type="match status" value="1"/>
</dbReference>
<dbReference type="Pfam" id="PF00116">
    <property type="entry name" value="COX2"/>
    <property type="match status" value="1"/>
</dbReference>
<dbReference type="Pfam" id="PF02790">
    <property type="entry name" value="COX2_TM"/>
    <property type="match status" value="1"/>
</dbReference>
<dbReference type="PRINTS" id="PR01166">
    <property type="entry name" value="CYCOXIDASEII"/>
</dbReference>
<dbReference type="SUPFAM" id="SSF49503">
    <property type="entry name" value="Cupredoxins"/>
    <property type="match status" value="1"/>
</dbReference>
<dbReference type="SUPFAM" id="SSF81464">
    <property type="entry name" value="Cytochrome c oxidase subunit II-like, transmembrane region"/>
    <property type="match status" value="1"/>
</dbReference>
<dbReference type="PROSITE" id="PS00078">
    <property type="entry name" value="COX2"/>
    <property type="match status" value="1"/>
</dbReference>
<dbReference type="PROSITE" id="PS50857">
    <property type="entry name" value="COX2_CUA"/>
    <property type="match status" value="1"/>
</dbReference>
<dbReference type="PROSITE" id="PS50999">
    <property type="entry name" value="COX2_TM"/>
    <property type="match status" value="1"/>
</dbReference>
<proteinExistence type="inferred from homology"/>
<accession>P29878</accession>
<feature type="chain" id="PRO_0000183685" description="Cytochrome c oxidase subunit 2">
    <location>
        <begin position="1"/>
        <end position="227"/>
    </location>
</feature>
<feature type="topological domain" description="Mitochondrial intermembrane" evidence="2">
    <location>
        <begin position="1"/>
        <end position="26"/>
    </location>
</feature>
<feature type="transmembrane region" description="Helical" evidence="2">
    <location>
        <begin position="27"/>
        <end position="48"/>
    </location>
</feature>
<feature type="topological domain" description="Mitochondrial matrix" evidence="2">
    <location>
        <begin position="49"/>
        <end position="62"/>
    </location>
</feature>
<feature type="transmembrane region" description="Helical" evidence="2">
    <location>
        <begin position="63"/>
        <end position="82"/>
    </location>
</feature>
<feature type="topological domain" description="Mitochondrial intermembrane" evidence="2">
    <location>
        <begin position="83"/>
        <end position="227"/>
    </location>
</feature>
<feature type="binding site" evidence="1">
    <location>
        <position position="161"/>
    </location>
    <ligand>
        <name>Cu cation</name>
        <dbReference type="ChEBI" id="CHEBI:23378"/>
        <label>A1</label>
    </ligand>
</feature>
<feature type="binding site" evidence="1">
    <location>
        <position position="196"/>
    </location>
    <ligand>
        <name>Cu cation</name>
        <dbReference type="ChEBI" id="CHEBI:23378"/>
        <label>A1</label>
    </ligand>
</feature>
<feature type="binding site" evidence="1">
    <location>
        <position position="196"/>
    </location>
    <ligand>
        <name>Cu cation</name>
        <dbReference type="ChEBI" id="CHEBI:23378"/>
        <label>A2</label>
    </ligand>
</feature>
<feature type="binding site" evidence="1">
    <location>
        <position position="198"/>
    </location>
    <ligand>
        <name>Cu cation</name>
        <dbReference type="ChEBI" id="CHEBI:23378"/>
        <label>A2</label>
    </ligand>
</feature>
<feature type="binding site" evidence="1">
    <location>
        <position position="198"/>
    </location>
    <ligand>
        <name>Mg(2+)</name>
        <dbReference type="ChEBI" id="CHEBI:18420"/>
        <note>ligand shared with subunit 1</note>
    </ligand>
</feature>
<feature type="binding site" evidence="1">
    <location>
        <position position="200"/>
    </location>
    <ligand>
        <name>Cu cation</name>
        <dbReference type="ChEBI" id="CHEBI:23378"/>
        <label>A1</label>
    </ligand>
</feature>
<feature type="binding site" evidence="1">
    <location>
        <position position="200"/>
    </location>
    <ligand>
        <name>Cu cation</name>
        <dbReference type="ChEBI" id="CHEBI:23378"/>
        <label>A2</label>
    </ligand>
</feature>
<feature type="binding site" evidence="1">
    <location>
        <position position="204"/>
    </location>
    <ligand>
        <name>Cu cation</name>
        <dbReference type="ChEBI" id="CHEBI:23378"/>
        <label>A2</label>
    </ligand>
</feature>
<feature type="binding site" evidence="1">
    <location>
        <position position="207"/>
    </location>
    <ligand>
        <name>Cu cation</name>
        <dbReference type="ChEBI" id="CHEBI:23378"/>
        <label>A1</label>
    </ligand>
</feature>
<gene>
    <name type="primary">COII</name>
</gene>
<name>COX2_SCHGR</name>
<organism>
    <name type="scientific">Schistocerca gregaria</name>
    <name type="common">Desert locust</name>
    <name type="synonym">Gryllus gregarius</name>
    <dbReference type="NCBI Taxonomy" id="7010"/>
    <lineage>
        <taxon>Eukaryota</taxon>
        <taxon>Metazoa</taxon>
        <taxon>Ecdysozoa</taxon>
        <taxon>Arthropoda</taxon>
        <taxon>Hexapoda</taxon>
        <taxon>Insecta</taxon>
        <taxon>Pterygota</taxon>
        <taxon>Neoptera</taxon>
        <taxon>Polyneoptera</taxon>
        <taxon>Orthoptera</taxon>
        <taxon>Caelifera</taxon>
        <taxon>Acrididea</taxon>
        <taxon>Acridomorpha</taxon>
        <taxon>Acridoidea</taxon>
        <taxon>Acrididae</taxon>
        <taxon>Cyrtacanthacridinae</taxon>
        <taxon>Schistocerca</taxon>
    </lineage>
</organism>
<sequence length="227" mass="25804">MATWSNLSIQDGASPLMEQLSFFHDDHTMVVLLITVIVGYALSYMLFNAYTNRNMLHGHLIETIWTALPAITLIFIALPSLRLLYLLDDSVDAMITIKTIGRQWYWSYEYSDFMDVEFDTYMTPEQDLENDGFRLLDVDNRTILPMNTEVRVLTSASDVLHSWAVPALGVKIDATPGRLNQGTFTMNRPGLFFGQCSEICGANHSFMPIVIESTSVNLFIKWLSKMI</sequence>
<geneLocation type="mitochondrion"/>
<comment type="function">
    <text evidence="1">Component of the cytochrome c oxidase, the last enzyme in the mitochondrial electron transport chain which drives oxidative phosphorylation. The respiratory chain contains 3 multisubunit complexes succinate dehydrogenase (complex II, CII), ubiquinol-cytochrome c oxidoreductase (cytochrome b-c1 complex, complex III, CIII) and cytochrome c oxidase (complex IV, CIV), that cooperate to transfer electrons derived from NADH and succinate to molecular oxygen, creating an electrochemical gradient over the inner membrane that drives transmembrane transport and the ATP synthase. Cytochrome c oxidase is the component of the respiratory chain that catalyzes the reduction of oxygen to water. Electrons originating from reduced cytochrome c in the intermembrane space (IMS) are transferred via the dinuclear copper A center (CU(A)) of subunit 2 and heme A of subunit 1 to the active site in subunit 1, a binuclear center (BNC) formed by heme A3 and copper B (CU(B)). The BNC reduces molecular oxygen to 2 water molecules using 4 electrons from cytochrome c in the IMS and 4 protons from the mitochondrial matrix.</text>
</comment>
<comment type="catalytic activity">
    <reaction evidence="1">
        <text>4 Fe(II)-[cytochrome c] + O2 + 8 H(+)(in) = 4 Fe(III)-[cytochrome c] + 2 H2O + 4 H(+)(out)</text>
        <dbReference type="Rhea" id="RHEA:11436"/>
        <dbReference type="Rhea" id="RHEA-COMP:10350"/>
        <dbReference type="Rhea" id="RHEA-COMP:14399"/>
        <dbReference type="ChEBI" id="CHEBI:15377"/>
        <dbReference type="ChEBI" id="CHEBI:15378"/>
        <dbReference type="ChEBI" id="CHEBI:15379"/>
        <dbReference type="ChEBI" id="CHEBI:29033"/>
        <dbReference type="ChEBI" id="CHEBI:29034"/>
        <dbReference type="EC" id="7.1.1.9"/>
    </reaction>
    <physiologicalReaction direction="left-to-right" evidence="1">
        <dbReference type="Rhea" id="RHEA:11437"/>
    </physiologicalReaction>
</comment>
<comment type="cofactor">
    <cofactor evidence="1">
        <name>Cu cation</name>
        <dbReference type="ChEBI" id="CHEBI:23378"/>
    </cofactor>
    <text evidence="1">Binds a dinuclear copper A center per subunit.</text>
</comment>
<comment type="subunit">
    <text evidence="1">Component of the cytochrome c oxidase (complex IV, CIV), a multisubunit enzyme composed of a catalytic core of 3 subunits and several supernumerary subunits. The complex exists as a monomer or a dimer and forms supercomplexes (SCs) in the inner mitochondrial membrane with ubiquinol-cytochrome c oxidoreductase (cytochrome b-c1 complex, complex III, CIII).</text>
</comment>
<comment type="subcellular location">
    <subcellularLocation>
        <location evidence="1">Mitochondrion inner membrane</location>
        <topology evidence="1">Multi-pass membrane protein</topology>
    </subcellularLocation>
</comment>
<comment type="similarity">
    <text evidence="3">Belongs to the cytochrome c oxidase subunit 2 family.</text>
</comment>
<keyword id="KW-0186">Copper</keyword>
<keyword id="KW-0249">Electron transport</keyword>
<keyword id="KW-0460">Magnesium</keyword>
<keyword id="KW-0472">Membrane</keyword>
<keyword id="KW-0479">Metal-binding</keyword>
<keyword id="KW-0496">Mitochondrion</keyword>
<keyword id="KW-0999">Mitochondrion inner membrane</keyword>
<keyword id="KW-0679">Respiratory chain</keyword>
<keyword id="KW-1278">Translocase</keyword>
<keyword id="KW-0812">Transmembrane</keyword>
<keyword id="KW-1133">Transmembrane helix</keyword>
<keyword id="KW-0813">Transport</keyword>
<protein>
    <recommendedName>
        <fullName>Cytochrome c oxidase subunit 2</fullName>
        <ecNumber>7.1.1.9</ecNumber>
    </recommendedName>
    <alternativeName>
        <fullName>Cytochrome c oxidase polypeptide II</fullName>
    </alternativeName>
</protein>